<feature type="chain" id="PRO_1000015109" description="Small ribosomal subunit protein uS10">
    <location>
        <begin position="1"/>
        <end position="103"/>
    </location>
</feature>
<organism>
    <name type="scientific">Shewanella denitrificans (strain OS217 / ATCC BAA-1090 / DSM 15013)</name>
    <dbReference type="NCBI Taxonomy" id="318161"/>
    <lineage>
        <taxon>Bacteria</taxon>
        <taxon>Pseudomonadati</taxon>
        <taxon>Pseudomonadota</taxon>
        <taxon>Gammaproteobacteria</taxon>
        <taxon>Alteromonadales</taxon>
        <taxon>Shewanellaceae</taxon>
        <taxon>Shewanella</taxon>
    </lineage>
</organism>
<evidence type="ECO:0000255" key="1">
    <source>
        <dbReference type="HAMAP-Rule" id="MF_00508"/>
    </source>
</evidence>
<evidence type="ECO:0000305" key="2"/>
<keyword id="KW-1185">Reference proteome</keyword>
<keyword id="KW-0687">Ribonucleoprotein</keyword>
<keyword id="KW-0689">Ribosomal protein</keyword>
<sequence length="103" mass="11753">MQNQRIRIRLKGFDHRLIDQSTAEIVETAKRTGAQVRGPIPLPTRKERFTVLISPHVNKDARDQYEIRTHKRLVDIVEPTEKTVDALMRLDLAAGVDVQISLG</sequence>
<accession>Q12SW0</accession>
<comment type="function">
    <text evidence="1">Involved in the binding of tRNA to the ribosomes.</text>
</comment>
<comment type="subunit">
    <text evidence="1">Part of the 30S ribosomal subunit.</text>
</comment>
<comment type="similarity">
    <text evidence="1">Belongs to the universal ribosomal protein uS10 family.</text>
</comment>
<dbReference type="EMBL" id="CP000302">
    <property type="protein sequence ID" value="ABE53466.1"/>
    <property type="molecule type" value="Genomic_DNA"/>
</dbReference>
<dbReference type="RefSeq" id="WP_011494635.1">
    <property type="nucleotide sequence ID" value="NC_007954.1"/>
</dbReference>
<dbReference type="SMR" id="Q12SW0"/>
<dbReference type="STRING" id="318161.Sden_0169"/>
<dbReference type="KEGG" id="sdn:Sden_0169"/>
<dbReference type="eggNOG" id="COG0051">
    <property type="taxonomic scope" value="Bacteria"/>
</dbReference>
<dbReference type="HOGENOM" id="CLU_122625_1_3_6"/>
<dbReference type="OrthoDB" id="9804464at2"/>
<dbReference type="Proteomes" id="UP000001982">
    <property type="component" value="Chromosome"/>
</dbReference>
<dbReference type="GO" id="GO:1990904">
    <property type="term" value="C:ribonucleoprotein complex"/>
    <property type="evidence" value="ECO:0007669"/>
    <property type="project" value="UniProtKB-KW"/>
</dbReference>
<dbReference type="GO" id="GO:0005840">
    <property type="term" value="C:ribosome"/>
    <property type="evidence" value="ECO:0007669"/>
    <property type="project" value="UniProtKB-KW"/>
</dbReference>
<dbReference type="GO" id="GO:0003735">
    <property type="term" value="F:structural constituent of ribosome"/>
    <property type="evidence" value="ECO:0007669"/>
    <property type="project" value="InterPro"/>
</dbReference>
<dbReference type="GO" id="GO:0000049">
    <property type="term" value="F:tRNA binding"/>
    <property type="evidence" value="ECO:0007669"/>
    <property type="project" value="UniProtKB-UniRule"/>
</dbReference>
<dbReference type="GO" id="GO:0006412">
    <property type="term" value="P:translation"/>
    <property type="evidence" value="ECO:0007669"/>
    <property type="project" value="UniProtKB-UniRule"/>
</dbReference>
<dbReference type="FunFam" id="3.30.70.600:FF:000001">
    <property type="entry name" value="30S ribosomal protein S10"/>
    <property type="match status" value="1"/>
</dbReference>
<dbReference type="Gene3D" id="3.30.70.600">
    <property type="entry name" value="Ribosomal protein S10 domain"/>
    <property type="match status" value="1"/>
</dbReference>
<dbReference type="HAMAP" id="MF_00508">
    <property type="entry name" value="Ribosomal_uS10"/>
    <property type="match status" value="1"/>
</dbReference>
<dbReference type="InterPro" id="IPR001848">
    <property type="entry name" value="Ribosomal_uS10"/>
</dbReference>
<dbReference type="InterPro" id="IPR018268">
    <property type="entry name" value="Ribosomal_uS10_CS"/>
</dbReference>
<dbReference type="InterPro" id="IPR027486">
    <property type="entry name" value="Ribosomal_uS10_dom"/>
</dbReference>
<dbReference type="InterPro" id="IPR036838">
    <property type="entry name" value="Ribosomal_uS10_dom_sf"/>
</dbReference>
<dbReference type="NCBIfam" id="NF001861">
    <property type="entry name" value="PRK00596.1"/>
    <property type="match status" value="1"/>
</dbReference>
<dbReference type="NCBIfam" id="TIGR01049">
    <property type="entry name" value="rpsJ_bact"/>
    <property type="match status" value="1"/>
</dbReference>
<dbReference type="PANTHER" id="PTHR11700">
    <property type="entry name" value="30S RIBOSOMAL PROTEIN S10 FAMILY MEMBER"/>
    <property type="match status" value="1"/>
</dbReference>
<dbReference type="Pfam" id="PF00338">
    <property type="entry name" value="Ribosomal_S10"/>
    <property type="match status" value="1"/>
</dbReference>
<dbReference type="PRINTS" id="PR00971">
    <property type="entry name" value="RIBOSOMALS10"/>
</dbReference>
<dbReference type="SMART" id="SM01403">
    <property type="entry name" value="Ribosomal_S10"/>
    <property type="match status" value="1"/>
</dbReference>
<dbReference type="SUPFAM" id="SSF54999">
    <property type="entry name" value="Ribosomal protein S10"/>
    <property type="match status" value="1"/>
</dbReference>
<dbReference type="PROSITE" id="PS00361">
    <property type="entry name" value="RIBOSOMAL_S10"/>
    <property type="match status" value="1"/>
</dbReference>
<name>RS10_SHEDO</name>
<protein>
    <recommendedName>
        <fullName evidence="1">Small ribosomal subunit protein uS10</fullName>
    </recommendedName>
    <alternativeName>
        <fullName evidence="2">30S ribosomal protein S10</fullName>
    </alternativeName>
</protein>
<reference key="1">
    <citation type="submission" date="2006-03" db="EMBL/GenBank/DDBJ databases">
        <title>Complete sequence of Shewanella denitrificans OS217.</title>
        <authorList>
            <consortium name="US DOE Joint Genome Institute"/>
            <person name="Copeland A."/>
            <person name="Lucas S."/>
            <person name="Lapidus A."/>
            <person name="Barry K."/>
            <person name="Detter J.C."/>
            <person name="Glavina del Rio T."/>
            <person name="Hammon N."/>
            <person name="Israni S."/>
            <person name="Dalin E."/>
            <person name="Tice H."/>
            <person name="Pitluck S."/>
            <person name="Brettin T."/>
            <person name="Bruce D."/>
            <person name="Han C."/>
            <person name="Tapia R."/>
            <person name="Gilna P."/>
            <person name="Kiss H."/>
            <person name="Schmutz J."/>
            <person name="Larimer F."/>
            <person name="Land M."/>
            <person name="Hauser L."/>
            <person name="Kyrpides N."/>
            <person name="Lykidis A."/>
            <person name="Richardson P."/>
        </authorList>
    </citation>
    <scope>NUCLEOTIDE SEQUENCE [LARGE SCALE GENOMIC DNA]</scope>
    <source>
        <strain>OS217 / ATCC BAA-1090 / DSM 15013</strain>
    </source>
</reference>
<gene>
    <name evidence="1" type="primary">rpsJ</name>
    <name type="ordered locus">Sden_0169</name>
</gene>
<proteinExistence type="inferred from homology"/>